<gene>
    <name evidence="21" type="primary">UVR8</name>
    <name evidence="23" type="ordered locus">At5g63860</name>
    <name evidence="24" type="ORF">MGI19.7</name>
</gene>
<accession>Q9FN03</accession>
<accession>Q9XHD7</accession>
<reference key="1">
    <citation type="journal article" date="2002" name="Plant Physiol.">
        <title>Arabidopsis UVR8 regulates ultraviolet-B signal transduction and tolerance and contains sequence similarity to human regulator of chromatin condensation 1.</title>
        <authorList>
            <person name="Kliebenstein D.J."/>
            <person name="Lim J.E."/>
            <person name="Landry L.G."/>
            <person name="Last R.L."/>
        </authorList>
    </citation>
    <scope>NUCLEOTIDE SEQUENCE [MRNA]</scope>
    <scope>DISRUPTION PHENOTYPE</scope>
    <scope>MUTAGENESIS OF 196-TRP--ARG-200</scope>
    <source>
        <strain>cv. Landsberg erecta</strain>
    </source>
</reference>
<reference key="2">
    <citation type="journal article" date="1997" name="DNA Res.">
        <title>Structural analysis of Arabidopsis thaliana chromosome 5. III. Sequence features of the regions of 1,191,918 bp covered by seventeen physically assigned P1 clones.</title>
        <authorList>
            <person name="Nakamura Y."/>
            <person name="Sato S."/>
            <person name="Kaneko T."/>
            <person name="Kotani H."/>
            <person name="Asamizu E."/>
            <person name="Miyajima N."/>
            <person name="Tabata S."/>
        </authorList>
    </citation>
    <scope>NUCLEOTIDE SEQUENCE [LARGE SCALE GENOMIC DNA]</scope>
    <source>
        <strain>cv. Columbia</strain>
    </source>
</reference>
<reference key="3">
    <citation type="journal article" date="2017" name="Plant J.">
        <title>Araport11: a complete reannotation of the Arabidopsis thaliana reference genome.</title>
        <authorList>
            <person name="Cheng C.Y."/>
            <person name="Krishnakumar V."/>
            <person name="Chan A.P."/>
            <person name="Thibaud-Nissen F."/>
            <person name="Schobel S."/>
            <person name="Town C.D."/>
        </authorList>
    </citation>
    <scope>GENOME REANNOTATION</scope>
    <source>
        <strain>cv. Columbia</strain>
    </source>
</reference>
<reference key="4">
    <citation type="journal article" date="2003" name="Science">
        <title>Empirical analysis of transcriptional activity in the Arabidopsis genome.</title>
        <authorList>
            <person name="Yamada K."/>
            <person name="Lim J."/>
            <person name="Dale J.M."/>
            <person name="Chen H."/>
            <person name="Shinn P."/>
            <person name="Palm C.J."/>
            <person name="Southwick A.M."/>
            <person name="Wu H.C."/>
            <person name="Kim C.J."/>
            <person name="Nguyen M."/>
            <person name="Pham P.K."/>
            <person name="Cheuk R.F."/>
            <person name="Karlin-Newmann G."/>
            <person name="Liu S.X."/>
            <person name="Lam B."/>
            <person name="Sakano H."/>
            <person name="Wu T."/>
            <person name="Yu G."/>
            <person name="Miranda M."/>
            <person name="Quach H.L."/>
            <person name="Tripp M."/>
            <person name="Chang C.H."/>
            <person name="Lee J.M."/>
            <person name="Toriumi M.J."/>
            <person name="Chan M.M."/>
            <person name="Tang C.C."/>
            <person name="Onodera C.S."/>
            <person name="Deng J.M."/>
            <person name="Akiyama K."/>
            <person name="Ansari Y."/>
            <person name="Arakawa T."/>
            <person name="Banh J."/>
            <person name="Banno F."/>
            <person name="Bowser L."/>
            <person name="Brooks S.Y."/>
            <person name="Carninci P."/>
            <person name="Chao Q."/>
            <person name="Choy N."/>
            <person name="Enju A."/>
            <person name="Goldsmith A.D."/>
            <person name="Gurjal M."/>
            <person name="Hansen N.F."/>
            <person name="Hayashizaki Y."/>
            <person name="Johnson-Hopson C."/>
            <person name="Hsuan V.W."/>
            <person name="Iida K."/>
            <person name="Karnes M."/>
            <person name="Khan S."/>
            <person name="Koesema E."/>
            <person name="Ishida J."/>
            <person name="Jiang P.X."/>
            <person name="Jones T."/>
            <person name="Kawai J."/>
            <person name="Kamiya A."/>
            <person name="Meyers C."/>
            <person name="Nakajima M."/>
            <person name="Narusaka M."/>
            <person name="Seki M."/>
            <person name="Sakurai T."/>
            <person name="Satou M."/>
            <person name="Tamse R."/>
            <person name="Vaysberg M."/>
            <person name="Wallender E.K."/>
            <person name="Wong C."/>
            <person name="Yamamura Y."/>
            <person name="Yuan S."/>
            <person name="Shinozaki K."/>
            <person name="Davis R.W."/>
            <person name="Theologis A."/>
            <person name="Ecker J.R."/>
        </authorList>
    </citation>
    <scope>NUCLEOTIDE SEQUENCE [LARGE SCALE MRNA]</scope>
    <source>
        <strain>cv. Columbia</strain>
    </source>
</reference>
<reference key="5">
    <citation type="journal article" date="2005" name="Proc. Natl. Acad. Sci. U.S.A.">
        <title>A UV-B-specific signaling component orchestrates plant UV protection.</title>
        <authorList>
            <person name="Brown B.A."/>
            <person name="Cloix C."/>
            <person name="Jiang G.H."/>
            <person name="Kaiserli E."/>
            <person name="Herzyk P."/>
            <person name="Kliebenstein D.J."/>
            <person name="Jenkins G.I."/>
        </authorList>
    </citation>
    <scope>FUNCTION</scope>
    <scope>SUBCELLULAR LOCATION</scope>
</reference>
<reference key="6">
    <citation type="journal article" date="2007" name="Plant Cell">
        <title>UV-B promotes rapid nuclear translocation of the Arabidopsis UV-B specific signaling component UVR8 and activates its function in the nucleus.</title>
        <authorList>
            <person name="Kaiserli E."/>
            <person name="Jenkins G.I."/>
        </authorList>
    </citation>
    <scope>FUNCTION</scope>
    <scope>SUBCELLULAR LOCATION</scope>
</reference>
<reference key="7">
    <citation type="journal article" date="2008" name="Plant Physiol.">
        <title>UV-B signaling pathways with different fluence-rate response profiles are distinguished in mature Arabidopsis leaf tissue by requirement for UVR8, HY5, and HYH.</title>
        <authorList>
            <person name="Brown B.A."/>
            <person name="Jenkins G.I."/>
        </authorList>
    </citation>
    <scope>FUNCTION</scope>
</reference>
<reference key="8">
    <citation type="journal article" date="2008" name="Mol. Plant">
        <title>Interaction of the Arabidopsis UV-B-specific signaling component UVR8 with chromatin.</title>
        <authorList>
            <person name="Cloix C."/>
            <person name="Jenkins G.I."/>
        </authorList>
    </citation>
    <scope>INTERACTION WITH HISTONE H2B</scope>
</reference>
<reference key="9">
    <citation type="journal article" date="2009" name="EMBO J.">
        <title>Interaction of COP1 and UVR8 regulates UV-B-induced photomorphogenesis and stress acclimation in Arabidopsis.</title>
        <authorList>
            <person name="Favory J.J."/>
            <person name="Stec A."/>
            <person name="Gruber H."/>
            <person name="Rizzini L."/>
            <person name="Oravecz A."/>
            <person name="Funk M."/>
            <person name="Albert A."/>
            <person name="Cloix C."/>
            <person name="Jenkins G.I."/>
            <person name="Oakeley E.J."/>
            <person name="Seidlitz H.K."/>
            <person name="Nagy F."/>
            <person name="Ulm R."/>
        </authorList>
    </citation>
    <scope>FUNCTION</scope>
    <scope>INTERACTION WITH COP1</scope>
    <source>
        <strain>cv. Wassilewskija</strain>
    </source>
</reference>
<reference key="10">
    <citation type="journal article" date="2009" name="New Phytol.">
        <title>UVR8 in Arabidopsis thaliana regulates multiple aspects of cellular differentiation during leaf development in response to ultraviolet B radiation.</title>
        <authorList>
            <person name="Wargent J.J."/>
            <person name="Gegas V.C."/>
            <person name="Jenkins G.I."/>
            <person name="Doonan J.H."/>
            <person name="Paul N.D."/>
        </authorList>
    </citation>
    <scope>FUNCTION</scope>
</reference>
<reference key="11">
    <citation type="journal article" date="2010" name="Proc. Natl. Acad. Sci. U.S.A.">
        <title>Negative feedback regulation of UV-B-induced photomorphogenesis and stress acclimation in Arabidopsis.</title>
        <authorList>
            <person name="Gruber H."/>
            <person name="Heijde M."/>
            <person name="Heller W."/>
            <person name="Albert A."/>
            <person name="Seidlitz H.K."/>
            <person name="Ulm R."/>
        </authorList>
    </citation>
    <scope>FUNCTION</scope>
    <scope>INTERACTION WITH RUP1 AND RUP2</scope>
</reference>
<reference key="12">
    <citation type="journal article" date="2011" name="Plant J.">
        <title>Functional interaction of the circadian clock and UV RESISTANCE LOCUS 8-controlled UV-B signaling pathways in Arabidopsis thaliana.</title>
        <authorList>
            <person name="Feher B."/>
            <person name="Kozma-Bognar L."/>
            <person name="Kevei E."/>
            <person name="Hajdu A."/>
            <person name="Binkert M."/>
            <person name="Davis S.J."/>
            <person name="Schaefer E."/>
            <person name="Ulm R."/>
            <person name="Nagy F."/>
        </authorList>
    </citation>
    <scope>FUNCTION</scope>
</reference>
<reference key="13">
    <citation type="journal article" date="2011" name="Science">
        <title>Perception of UV-B by the Arabidopsis UVR8 protein.</title>
        <authorList>
            <person name="Rizzini L."/>
            <person name="Favory J.J."/>
            <person name="Cloix C."/>
            <person name="Faggionato D."/>
            <person name="O'Hara A."/>
            <person name="Kaiserli E."/>
            <person name="Baumeister R."/>
            <person name="Schaefer E."/>
            <person name="Nagy F."/>
            <person name="Jenkins G.I."/>
            <person name="Ulm R."/>
        </authorList>
    </citation>
    <scope>FUNCTION</scope>
    <scope>SUBUNIT</scope>
    <scope>INTERACTION WITH COP1</scope>
    <scope>MUTAGENESIS OF GLY-145; GLY-202 AND TRP-285</scope>
</reference>
<reference key="14">
    <citation type="journal article" date="2012" name="Mol. Cell. Proteomics">
        <title>Comparative large-scale characterisation of plant vs. mammal proteins reveals similar and idiosyncratic N-alpha acetylation features.</title>
        <authorList>
            <person name="Bienvenut W.V."/>
            <person name="Sumpton D."/>
            <person name="Martinez A."/>
            <person name="Lilla S."/>
            <person name="Espagne C."/>
            <person name="Meinnel T."/>
            <person name="Giglione C."/>
        </authorList>
    </citation>
    <scope>ACETYLATION [LARGE SCALE ANALYSIS] AT ALA-2</scope>
    <scope>CLEAVAGE OF INITIATOR METHIONINE [LARGE SCALE ANALYSIS]</scope>
    <scope>IDENTIFICATION BY MASS SPECTROMETRY [LARGE SCALE ANALYSIS]</scope>
</reference>
<reference key="15">
    <citation type="journal article" date="2012" name="Mol. Plant">
        <title>UVR8 mediates UV-B-induced Arabidopsis defense responses against Botrytis cinerea by controlling sinapate accumulation.</title>
        <authorList>
            <person name="Demkura P.V."/>
            <person name="Ballare C.L."/>
        </authorList>
    </citation>
    <scope>FUNCTION</scope>
</reference>
<reference key="16">
    <citation type="journal article" date="2012" name="Photosyn. Res.">
        <title>The UV-B photoreceptor UVR8 promotes photosynthetic efficiency in Arabidopsis thaliana exposed to elevated levels of UV-B.</title>
        <authorList>
            <person name="Davey M.P."/>
            <person name="Susanti N.I."/>
            <person name="Wargent J.J."/>
            <person name="Findlay J.E."/>
            <person name="Paul Quick W."/>
            <person name="Paul N.D."/>
            <person name="Jenkins G.I."/>
        </authorList>
    </citation>
    <scope>FUNCTION</scope>
</reference>
<reference key="17">
    <citation type="journal article" date="2012" name="Plant Cell">
        <title>In vivo function of tryptophans in the Arabidopsis UV-B photoreceptor UVR8.</title>
        <authorList>
            <person name="O'Hara A."/>
            <person name="Jenkins G.I."/>
        </authorList>
    </citation>
    <scope>FUNCTION</scope>
    <scope>SUBUNIT</scope>
    <scope>INTERACTION WITH COP1</scope>
    <scope>MUTAGENESIS OF TRP-39; TRP-92; TRP-94; TRP-144; TRP-196; TRP-198; TRP-233; TRP-250; TRP-285; TRP-300; TRP-302; TRP-337; TRP-352 AND TRP-400</scope>
</reference>
<reference key="18">
    <citation type="journal article" date="2012" name="Proc. Natl. Acad. Sci. U.S.A.">
        <title>C-terminal region of the UV-B photoreceptor UVR8 initiates signaling through interaction with the COP1 protein.</title>
        <authorList>
            <person name="Cloix C."/>
            <person name="Kaiserli E."/>
            <person name="Heilmann M."/>
            <person name="Baxter K.J."/>
            <person name="Brown B.A."/>
            <person name="O'Hara A."/>
            <person name="Smith B.O."/>
            <person name="Christie J.M."/>
            <person name="Jenkins G.I."/>
        </authorList>
    </citation>
    <scope>FUNCTION</scope>
    <scope>INTERACTION WITH COP1; RUP1 AND RUP2</scope>
    <scope>MUTAGENESIS OF GLY-283</scope>
</reference>
<reference key="19">
    <citation type="journal article" date="2013" name="Plant Physiol.">
        <title>Rapid reversion from monomer to dimer regenerates the ultraviolet-B photoreceptor UV RESISTANCE LOCUS8 in intact Arabidopsis plants.</title>
        <authorList>
            <person name="Heilmann M."/>
            <person name="Jenkins G.I."/>
        </authorList>
    </citation>
    <scope>SUBUNIT</scope>
</reference>
<reference key="20">
    <citation type="journal article" date="2017" name="Biochem. Biophys. Res. Commun.">
        <title>DHU1 negatively regulates UV-B signaling via its direct interaction with COP1 and RUP1.</title>
        <authorList>
            <person name="Kim S.-H."/>
            <person name="Kim H."/>
            <person name="Chung S."/>
            <person name="Lee J.-H."/>
        </authorList>
    </citation>
    <scope>DISRUPTION PHENOTYPE</scope>
    <source>
        <strain>cv. Columbia</strain>
    </source>
</reference>
<reference key="21">
    <citation type="journal article" date="2012" name="Nature">
        <title>Structural basis of ultraviolet-B perception by UVR8.</title>
        <authorList>
            <person name="Wu D."/>
            <person name="Hu Q."/>
            <person name="Yan Z."/>
            <person name="Chen W."/>
            <person name="Yan C."/>
            <person name="Huang X."/>
            <person name="Zhang J."/>
            <person name="Yang P."/>
            <person name="Deng H."/>
            <person name="Wang J."/>
            <person name="Deng X."/>
            <person name="Shi Y."/>
        </authorList>
    </citation>
    <scope>X-RAY CRYSTALLOGRAPHY (1.76 ANGSTROMS) OF 10-381</scope>
    <scope>SUBUNIT</scope>
    <scope>MUTAGENESIS OF TRP-233; TRP-285 AND TRP-337</scope>
</reference>
<reference key="22">
    <citation type="journal article" date="2012" name="Science">
        <title>Plant UVR8 photoreceptor senses UV-B by tryptophan-mediated disruption of cross-dimer salt bridges.</title>
        <authorList>
            <person name="Christie J.M."/>
            <person name="Arvai A.S."/>
            <person name="Baxter K.J."/>
            <person name="Heilmann M."/>
            <person name="Pratt A.J."/>
            <person name="O'Hara A."/>
            <person name="Kelly S.M."/>
            <person name="Hothorn M."/>
            <person name="Smith B.O."/>
            <person name="Hitomi K."/>
            <person name="Jenkins G.I."/>
            <person name="Getzoff E.D."/>
        </authorList>
    </citation>
    <scope>X-RAY CRYSTALLOGRAPHY (1.70 ANGSTROMS) OF 1-405</scope>
    <scope>SUBUNIT</scope>
</reference>
<feature type="initiator methionine" description="Removed" evidence="25">
    <location>
        <position position="1"/>
    </location>
</feature>
<feature type="chain" id="PRO_0000421722" description="Ultraviolet-B receptor UVR8">
    <location>
        <begin position="2"/>
        <end position="440"/>
    </location>
</feature>
<feature type="repeat" description="RCC1 1" evidence="1">
    <location>
        <begin position="2"/>
        <end position="31"/>
    </location>
</feature>
<feature type="repeat" description="RCC1 2" evidence="1">
    <location>
        <begin position="32"/>
        <end position="84"/>
    </location>
</feature>
<feature type="repeat" description="RCC1 3" evidence="1">
    <location>
        <begin position="86"/>
        <end position="137"/>
    </location>
</feature>
<feature type="repeat" description="RCC1 4" evidence="1">
    <location>
        <begin position="139"/>
        <end position="189"/>
    </location>
</feature>
<feature type="repeat" description="RCC1 5" evidence="1">
    <location>
        <begin position="190"/>
        <end position="241"/>
    </location>
</feature>
<feature type="repeat" description="RCC1 6" evidence="1">
    <location>
        <begin position="243"/>
        <end position="293"/>
    </location>
</feature>
<feature type="repeat" description="RCC1 7" evidence="1">
    <location>
        <begin position="294"/>
        <end position="345"/>
    </location>
</feature>
<feature type="repeat" description="RCC1 8" evidence="1">
    <location>
        <begin position="347"/>
        <end position="399"/>
    </location>
</feature>
<feature type="region of interest" description="Required for interaction with COP1">
    <location>
        <begin position="397"/>
        <end position="423"/>
    </location>
</feature>
<feature type="region of interest" description="Disordered" evidence="2">
    <location>
        <begin position="413"/>
        <end position="440"/>
    </location>
</feature>
<feature type="modified residue" description="N-acetylalanine" evidence="25">
    <location>
        <position position="2"/>
    </location>
</feature>
<feature type="mutagenesis site" description="Loss of function, homodimerization and interaction with COP1." evidence="17">
    <original>W</original>
    <variation>A</variation>
    <location>
        <position position="39"/>
    </location>
</feature>
<feature type="mutagenesis site" description="No effect on function, homodimerization and interaction with COP1." evidence="17">
    <original>W</original>
    <variation>F</variation>
    <location>
        <position position="39"/>
    </location>
</feature>
<feature type="mutagenesis site" description="No effect on function, homodimerization and interaction with COP1." evidence="17">
    <original>W</original>
    <variation>Y</variation>
    <location>
        <position position="39"/>
    </location>
</feature>
<feature type="mutagenesis site" description="No effect on function, homodimerization and interaction with COP1." evidence="17">
    <original>W</original>
    <variation>A</variation>
    <location>
        <position position="92"/>
    </location>
</feature>
<feature type="mutagenesis site" description="No effect on function, homodimerization and interaction with COP1." evidence="17">
    <original>W</original>
    <variation>A</variation>
    <location>
        <position position="94"/>
    </location>
</feature>
<feature type="mutagenesis site" description="Cannot interact with COP1." evidence="17">
    <original>W</original>
    <variation>A</variation>
    <location>
        <position position="144"/>
    </location>
</feature>
<feature type="mutagenesis site" description="No effect on the interaction with COP1." evidence="17">
    <original>W</original>
    <variation>F</variation>
    <location>
        <position position="144"/>
    </location>
</feature>
<feature type="mutagenesis site" description="No effect on the interaction with COP1." evidence="17">
    <original>W</original>
    <variation>Y</variation>
    <location>
        <position position="144"/>
    </location>
</feature>
<feature type="mutagenesis site" description="In uvr8-15; loss of function and interaction with COP1." evidence="12">
    <original>G</original>
    <variation>S</variation>
    <location>
        <position position="145"/>
    </location>
</feature>
<feature type="mutagenesis site" description="In uvr8-1; loss of function." evidence="3">
    <location>
        <begin position="196"/>
        <end position="200"/>
    </location>
</feature>
<feature type="mutagenesis site" description="No effect on function, homodimerization and interaction with COP1." evidence="17">
    <original>W</original>
    <variation>A</variation>
    <location>
        <position position="196"/>
    </location>
</feature>
<feature type="mutagenesis site" description="No effect on function, homodimerization and interaction with COP1." evidence="17">
    <original>W</original>
    <variation>A</variation>
    <location>
        <position position="198"/>
    </location>
</feature>
<feature type="mutagenesis site" description="In uvr8-9; loss of function and interaction with COP1." evidence="12">
    <original>G</original>
    <variation>R</variation>
    <location>
        <position position="202"/>
    </location>
</feature>
<feature type="mutagenesis site" description="Reduces response to UV-B." evidence="14 17">
    <original>W</original>
    <variation>A</variation>
    <location>
        <position position="233"/>
    </location>
</feature>
<feature type="mutagenesis site" description="No effect on function, homodimerization and interaction with COP1." evidence="17">
    <original>W</original>
    <variation>A</variation>
    <location>
        <position position="250"/>
    </location>
</feature>
<feature type="mutagenesis site" description="In uvr8-5; loss of response to UV-B." evidence="16">
    <original>G</original>
    <variation>E</variation>
    <location>
        <position position="283"/>
    </location>
</feature>
<feature type="mutagenesis site" description="Loss of function. Constitutive monomer." evidence="12 14 17">
    <original>W</original>
    <variation>A</variation>
    <location>
        <position position="285"/>
    </location>
</feature>
<feature type="mutagenesis site" description="Loss of function. Constitutive homodimer and no interaction with COP1." evidence="12 14 17">
    <original>W</original>
    <variation>F</variation>
    <location>
        <position position="285"/>
    </location>
</feature>
<feature type="mutagenesis site" description="No effect on function, homodimerization and interaction with COP1." evidence="17">
    <original>W</original>
    <variation>A</variation>
    <location>
        <position position="300"/>
    </location>
</feature>
<feature type="mutagenesis site" description="No effect on function, homodimerization and interaction with COP1." evidence="17">
    <original>W</original>
    <variation>A</variation>
    <location>
        <position position="302"/>
    </location>
</feature>
<feature type="mutagenesis site" description="Reduces response to UV-B." evidence="14 17">
    <original>W</original>
    <variation>A</variation>
    <location>
        <position position="337"/>
    </location>
</feature>
<feature type="mutagenesis site" description="Cannot interact with COP1." evidence="17">
    <original>W</original>
    <variation>A</variation>
    <location>
        <position position="352"/>
    </location>
</feature>
<feature type="mutagenesis site" description="No effect on the interaction with COP1." evidence="17">
    <original>W</original>
    <variation>F</variation>
    <location>
        <position position="352"/>
    </location>
</feature>
<feature type="mutagenesis site" description="No effect on the interaction with COP1." evidence="17">
    <original>W</original>
    <variation>Y</variation>
    <location>
        <position position="352"/>
    </location>
</feature>
<feature type="mutagenesis site" description="No effect on function, homodimerization and interaction with COP1." evidence="17">
    <original>W</original>
    <variation>A</variation>
    <location>
        <position position="400"/>
    </location>
</feature>
<feature type="sequence conflict" description="In Ref. 1; AAD43920." evidence="22" ref="1">
    <original>R</original>
    <variation>P</variation>
    <location>
        <position position="173"/>
    </location>
</feature>
<feature type="strand" evidence="27">
    <location>
        <begin position="17"/>
        <end position="22"/>
    </location>
</feature>
<feature type="strand" evidence="27">
    <location>
        <begin position="24"/>
        <end position="31"/>
    </location>
</feature>
<feature type="turn" evidence="27">
    <location>
        <begin position="32"/>
        <end position="34"/>
    </location>
</feature>
<feature type="strand" evidence="27">
    <location>
        <begin position="35"/>
        <end position="40"/>
    </location>
</feature>
<feature type="strand" evidence="27">
    <location>
        <begin position="49"/>
        <end position="51"/>
    </location>
</feature>
<feature type="strand" evidence="27">
    <location>
        <begin position="55"/>
        <end position="60"/>
    </location>
</feature>
<feature type="helix" evidence="27">
    <location>
        <begin position="62"/>
        <end position="64"/>
    </location>
</feature>
<feature type="strand" evidence="27">
    <location>
        <begin position="69"/>
        <end position="74"/>
    </location>
</feature>
<feature type="strand" evidence="27">
    <location>
        <begin position="76"/>
        <end position="83"/>
    </location>
</feature>
<feature type="turn" evidence="27">
    <location>
        <begin position="84"/>
        <end position="87"/>
    </location>
</feature>
<feature type="strand" evidence="27">
    <location>
        <begin position="88"/>
        <end position="93"/>
    </location>
</feature>
<feature type="helix" evidence="27">
    <location>
        <begin position="96"/>
        <end position="98"/>
    </location>
</feature>
<feature type="strand" evidence="27">
    <location>
        <begin position="102"/>
        <end position="104"/>
    </location>
</feature>
<feature type="strand" evidence="27">
    <location>
        <begin position="108"/>
        <end position="113"/>
    </location>
</feature>
<feature type="helix" evidence="27">
    <location>
        <begin position="115"/>
        <end position="117"/>
    </location>
</feature>
<feature type="strand" evidence="27">
    <location>
        <begin position="122"/>
        <end position="127"/>
    </location>
</feature>
<feature type="strand" evidence="27">
    <location>
        <begin position="129"/>
        <end position="136"/>
    </location>
</feature>
<feature type="strand" evidence="27">
    <location>
        <begin position="141"/>
        <end position="145"/>
    </location>
</feature>
<feature type="strand" evidence="27">
    <location>
        <begin position="154"/>
        <end position="156"/>
    </location>
</feature>
<feature type="strand" evidence="27">
    <location>
        <begin position="160"/>
        <end position="165"/>
    </location>
</feature>
<feature type="helix" evidence="27">
    <location>
        <begin position="167"/>
        <end position="169"/>
    </location>
</feature>
<feature type="strand" evidence="27">
    <location>
        <begin position="174"/>
        <end position="179"/>
    </location>
</feature>
<feature type="strand" evidence="27">
    <location>
        <begin position="181"/>
        <end position="188"/>
    </location>
</feature>
<feature type="strand" evidence="27">
    <location>
        <begin position="193"/>
        <end position="197"/>
    </location>
</feature>
<feature type="strand" evidence="26">
    <location>
        <begin position="200"/>
        <end position="202"/>
    </location>
</feature>
<feature type="strand" evidence="27">
    <location>
        <begin position="205"/>
        <end position="209"/>
    </location>
</feature>
<feature type="strand" evidence="27">
    <location>
        <begin position="212"/>
        <end position="217"/>
    </location>
</feature>
<feature type="turn" evidence="28">
    <location>
        <begin position="220"/>
        <end position="223"/>
    </location>
</feature>
<feature type="strand" evidence="27">
    <location>
        <begin position="226"/>
        <end position="231"/>
    </location>
</feature>
<feature type="strand" evidence="27">
    <location>
        <begin position="233"/>
        <end position="240"/>
    </location>
</feature>
<feature type="strand" evidence="27">
    <location>
        <begin position="245"/>
        <end position="249"/>
    </location>
</feature>
<feature type="strand" evidence="26">
    <location>
        <begin position="252"/>
        <end position="256"/>
    </location>
</feature>
<feature type="strand" evidence="27">
    <location>
        <begin position="258"/>
        <end position="260"/>
    </location>
</feature>
<feature type="strand" evidence="27">
    <location>
        <begin position="264"/>
        <end position="268"/>
    </location>
</feature>
<feature type="helix" evidence="27">
    <location>
        <begin position="271"/>
        <end position="273"/>
    </location>
</feature>
<feature type="strand" evidence="27">
    <location>
        <begin position="278"/>
        <end position="283"/>
    </location>
</feature>
<feature type="strand" evidence="27">
    <location>
        <begin position="285"/>
        <end position="292"/>
    </location>
</feature>
<feature type="strand" evidence="27">
    <location>
        <begin position="297"/>
        <end position="301"/>
    </location>
</feature>
<feature type="strand" evidence="28">
    <location>
        <begin position="304"/>
        <end position="306"/>
    </location>
</feature>
<feature type="strand" evidence="27">
    <location>
        <begin position="310"/>
        <end position="313"/>
    </location>
</feature>
<feature type="strand" evidence="27">
    <location>
        <begin position="316"/>
        <end position="322"/>
    </location>
</feature>
<feature type="helix" evidence="27">
    <location>
        <begin position="325"/>
        <end position="327"/>
    </location>
</feature>
<feature type="strand" evidence="27">
    <location>
        <begin position="330"/>
        <end position="335"/>
    </location>
</feature>
<feature type="strand" evidence="27">
    <location>
        <begin position="337"/>
        <end position="344"/>
    </location>
</feature>
<feature type="strand" evidence="27">
    <location>
        <begin position="349"/>
        <end position="353"/>
    </location>
</feature>
<feature type="strand" evidence="27">
    <location>
        <begin position="362"/>
        <end position="364"/>
    </location>
</feature>
<feature type="strand" evidence="27">
    <location>
        <begin position="368"/>
        <end position="373"/>
    </location>
</feature>
<feature type="helix" evidence="27">
    <location>
        <begin position="375"/>
        <end position="377"/>
    </location>
</feature>
<feature type="helix" evidence="29">
    <location>
        <begin position="403"/>
        <end position="405"/>
    </location>
</feature>
<feature type="strand" evidence="29">
    <location>
        <begin position="407"/>
        <end position="409"/>
    </location>
</feature>
<keyword id="KW-0002">3D-structure</keyword>
<keyword id="KW-0007">Acetylation</keyword>
<keyword id="KW-0157">Chromophore</keyword>
<keyword id="KW-0963">Cytoplasm</keyword>
<keyword id="KW-0539">Nucleus</keyword>
<keyword id="KW-0600">Photoreceptor protein</keyword>
<keyword id="KW-0675">Receptor</keyword>
<keyword id="KW-1185">Reference proteome</keyword>
<keyword id="KW-0677">Repeat</keyword>
<keyword id="KW-0716">Sensory transduction</keyword>
<proteinExistence type="evidence at protein level"/>
<name>UVR8_ARATH</name>
<organism>
    <name type="scientific">Arabidopsis thaliana</name>
    <name type="common">Mouse-ear cress</name>
    <dbReference type="NCBI Taxonomy" id="3702"/>
    <lineage>
        <taxon>Eukaryota</taxon>
        <taxon>Viridiplantae</taxon>
        <taxon>Streptophyta</taxon>
        <taxon>Embryophyta</taxon>
        <taxon>Tracheophyta</taxon>
        <taxon>Spermatophyta</taxon>
        <taxon>Magnoliopsida</taxon>
        <taxon>eudicotyledons</taxon>
        <taxon>Gunneridae</taxon>
        <taxon>Pentapetalae</taxon>
        <taxon>rosids</taxon>
        <taxon>malvids</taxon>
        <taxon>Brassicales</taxon>
        <taxon>Brassicaceae</taxon>
        <taxon>Camelineae</taxon>
        <taxon>Arabidopsis</taxon>
    </lineage>
</organism>
<evidence type="ECO:0000255" key="1"/>
<evidence type="ECO:0000256" key="2">
    <source>
        <dbReference type="SAM" id="MobiDB-lite"/>
    </source>
</evidence>
<evidence type="ECO:0000269" key="3">
    <source>
    </source>
</evidence>
<evidence type="ECO:0000269" key="4">
    <source>
    </source>
</evidence>
<evidence type="ECO:0000269" key="5">
    <source>
    </source>
</evidence>
<evidence type="ECO:0000269" key="6">
    <source>
    </source>
</evidence>
<evidence type="ECO:0000269" key="7">
    <source>
    </source>
</evidence>
<evidence type="ECO:0000269" key="8">
    <source>
    </source>
</evidence>
<evidence type="ECO:0000269" key="9">
    <source>
    </source>
</evidence>
<evidence type="ECO:0000269" key="10">
    <source>
    </source>
</evidence>
<evidence type="ECO:0000269" key="11">
    <source>
    </source>
</evidence>
<evidence type="ECO:0000269" key="12">
    <source>
    </source>
</evidence>
<evidence type="ECO:0000269" key="13">
    <source>
    </source>
</evidence>
<evidence type="ECO:0000269" key="14">
    <source>
    </source>
</evidence>
<evidence type="ECO:0000269" key="15">
    <source>
    </source>
</evidence>
<evidence type="ECO:0000269" key="16">
    <source>
    </source>
</evidence>
<evidence type="ECO:0000269" key="17">
    <source>
    </source>
</evidence>
<evidence type="ECO:0000269" key="18">
    <source>
    </source>
</evidence>
<evidence type="ECO:0000269" key="19">
    <source>
    </source>
</evidence>
<evidence type="ECO:0000269" key="20">
    <source>
    </source>
</evidence>
<evidence type="ECO:0000303" key="21">
    <source>
    </source>
</evidence>
<evidence type="ECO:0000305" key="22"/>
<evidence type="ECO:0000312" key="23">
    <source>
        <dbReference type="Araport" id="AT5G63860"/>
    </source>
</evidence>
<evidence type="ECO:0000312" key="24">
    <source>
        <dbReference type="EMBL" id="BAB11034.1"/>
    </source>
</evidence>
<evidence type="ECO:0007744" key="25">
    <source>
    </source>
</evidence>
<evidence type="ECO:0007829" key="26">
    <source>
        <dbReference type="PDB" id="6DD7"/>
    </source>
</evidence>
<evidence type="ECO:0007829" key="27">
    <source>
        <dbReference type="PDB" id="6XZL"/>
    </source>
</evidence>
<evidence type="ECO:0007829" key="28">
    <source>
        <dbReference type="PDB" id="7VGG"/>
    </source>
</evidence>
<evidence type="ECO:0007829" key="29">
    <source>
        <dbReference type="PDB" id="8GQE"/>
    </source>
</evidence>
<sequence>MAEDMAADEVTAPPRKVLIISAGASHSVALLSGDIVCSWGRGEDGQLGHGDAEDRPSPTQLSALDGHQIVSVTCGADHTVAYSQSGMEVYSWGWGDFGRLGHGNSSDLFTPLPIKALHGIRIKQIACGDSHCLAVTMEGEVQSWGRNQNGQLGLGDTEDSLVPQKIQAFEGIRIKMVAAGAEHTAAVTEDGDLYGWGWGRYGNLGLGDRTDRLVPERVTSTGGEKMSMVACGWRHTISVSYSGALYTYGWSKYGQLGHGDLEDHLIPHKLEALSNSFISQISGGWRHTMALTSDGKLYGWGWNKFGQVGVGNNLDQCSPVQVRFPDDQKVVQVSCGWRHTLAVTERNNVFAWGRGTNGQLGIGESVDRNFPKIIEALSVDGASGQHIESSNIDPSSGKSWVSPAERYAVVPDETGLTDGSSKGNGGDISVPQTDVKRVRI</sequence>
<comment type="function">
    <text evidence="4 5 6 7 8 10 11 12 15 16 17 19">UV-B specific signaling component that acts as a UV-B photoreceptor and plays a key role in establishing UV-protective responses in plants. Upon UV-B irradiation, UVR8 undergoes an immediate switch from homodimer to monomer, accumulates in the nucleus, interacts with the photomorphogenic repressor COP1 and regulates the expression of the transcription factor HY5 by associating with chromatin (through histone H2B binding) in the HY5 promoter region. UVR8 is involved in controlling aspects of leaf growth and morphogenesis in response to UV-B, is required for normal progression of endocycle and has a regulatory role in stomatal differentiation. Is required for plant circadian clock response to photomorphogenic UV-B light, partly through the transcriptional activation of responsive clock genes. Promotes photosynthetic efficiency at elevated levels of UV-B. Plays a role in mediating the effects of UV-B radiation on pathogen resistance by controlling the expression of the sinapate biosynthetic pathway. The two tryptophans, Trp-285 and Trp-233, serve collectively as the UV-B chromophore.</text>
</comment>
<comment type="subunit">
    <text evidence="7 9 10 12 13 14 16 17 18">Homodimer in the absence of UV-B, but absorption of UV-B induces monomerization of UVR8 and interaction with COP1. Interacts with RUP1, RUP2 and histone H2B.</text>
</comment>
<comment type="interaction">
    <interactant intactId="EBI-2407499">
        <id>Q9FN03</id>
    </interactant>
    <interactant intactId="EBI-301649">
        <id>P43254</id>
        <label>COP1</label>
    </interactant>
    <organismsDiffer>false</organismsDiffer>
    <experiments>4</experiments>
</comment>
<comment type="interaction">
    <interactant intactId="EBI-2407499">
        <id>Q9FN03</id>
    </interactant>
    <interactant intactId="EBI-15889073">
        <id>Q9FFA7</id>
        <label>RUP2</label>
    </interactant>
    <organismsDiffer>false</organismsDiffer>
    <experiments>3</experiments>
</comment>
<comment type="interaction">
    <interactant intactId="EBI-2407499">
        <id>Q9FN03</id>
    </interactant>
    <interactant intactId="EBI-2407499">
        <id>Q9FN03</id>
        <label>UVR8</label>
    </interactant>
    <organismsDiffer>false</organismsDiffer>
    <experiments>3</experiments>
</comment>
<comment type="subcellular location">
    <subcellularLocation>
        <location evidence="5">Nucleus</location>
    </subcellularLocation>
    <subcellularLocation>
        <location evidence="5">Cytoplasm</location>
        <location evidence="5">Cytosol</location>
    </subcellularLocation>
    <text evidence="5">UV-B promotes rapid accumulation of UVR8 in the nucleus.</text>
</comment>
<comment type="disruption phenotype">
    <text evidence="3 20">Hypersensitivity to ultraviolet-B (UV-B) illumination (PubMed:12226503, PubMed:28735869). Abrogated induction of DHU1 in response to UV-B (PubMed:28735869). Disruption in a plant lacking DHU1 alleviates its hypersensitivity to UV-B (PubMed:28735869).</text>
</comment>
<protein>
    <recommendedName>
        <fullName evidence="21">Ultraviolet-B receptor UVR8</fullName>
    </recommendedName>
    <alternativeName>
        <fullName evidence="21">Protein UV-B RESISTANCE 8</fullName>
    </alternativeName>
    <alternativeName>
        <fullName evidence="21">RCC1 domain-containing protein UVR8</fullName>
    </alternativeName>
</protein>
<dbReference type="EMBL" id="AF130441">
    <property type="protein sequence ID" value="AAD43920.1"/>
    <property type="molecule type" value="mRNA"/>
</dbReference>
<dbReference type="EMBL" id="AB007646">
    <property type="protein sequence ID" value="BAB11034.1"/>
    <property type="molecule type" value="Genomic_DNA"/>
</dbReference>
<dbReference type="EMBL" id="CP002688">
    <property type="protein sequence ID" value="AED97805.1"/>
    <property type="molecule type" value="Genomic_DNA"/>
</dbReference>
<dbReference type="EMBL" id="AY125497">
    <property type="protein sequence ID" value="AAM78089.1"/>
    <property type="molecule type" value="mRNA"/>
</dbReference>
<dbReference type="EMBL" id="BT000600">
    <property type="protein sequence ID" value="AAN18169.1"/>
    <property type="molecule type" value="mRNA"/>
</dbReference>
<dbReference type="PIR" id="T50662">
    <property type="entry name" value="T50662"/>
</dbReference>
<dbReference type="RefSeq" id="NP_201191.1">
    <property type="nucleotide sequence ID" value="NM_125781.4"/>
</dbReference>
<dbReference type="PDB" id="4D9S">
    <property type="method" value="X-ray"/>
    <property type="resolution" value="1.70 A"/>
    <property type="chains" value="A/B=1-405"/>
</dbReference>
<dbReference type="PDB" id="4DNU">
    <property type="method" value="X-ray"/>
    <property type="resolution" value="1.76 A"/>
    <property type="chains" value="A=10-381"/>
</dbReference>
<dbReference type="PDB" id="4DNV">
    <property type="method" value="X-ray"/>
    <property type="resolution" value="2.00 A"/>
    <property type="chains" value="A/B/C/D=12-381"/>
</dbReference>
<dbReference type="PDB" id="4DNW">
    <property type="method" value="X-ray"/>
    <property type="resolution" value="1.77 A"/>
    <property type="chains" value="A/B=12-385"/>
</dbReference>
<dbReference type="PDB" id="4NAA">
    <property type="method" value="X-ray"/>
    <property type="resolution" value="1.67 A"/>
    <property type="chains" value="A/B/C/D=13-381"/>
</dbReference>
<dbReference type="PDB" id="4NBM">
    <property type="method" value="X-ray"/>
    <property type="resolution" value="1.61 A"/>
    <property type="chains" value="A/B/C/D=13-381"/>
</dbReference>
<dbReference type="PDB" id="4NC4">
    <property type="method" value="X-ray"/>
    <property type="resolution" value="1.75 A"/>
    <property type="chains" value="A/B/C/D=13-381"/>
</dbReference>
<dbReference type="PDB" id="6DD7">
    <property type="method" value="X-ray"/>
    <property type="resolution" value="2.00 A"/>
    <property type="chains" value="A/B/C/D=13-381"/>
</dbReference>
<dbReference type="PDB" id="6QTQ">
    <property type="method" value="X-ray"/>
    <property type="resolution" value="1.30 A"/>
    <property type="chains" value="B=406-413"/>
</dbReference>
<dbReference type="PDB" id="6QTS">
    <property type="method" value="X-ray"/>
    <property type="resolution" value="1.11 A"/>
    <property type="chains" value="B=406-413"/>
</dbReference>
<dbReference type="PDB" id="6XZL">
    <property type="method" value="X-ray"/>
    <property type="resolution" value="1.39 A"/>
    <property type="chains" value="A=12-381"/>
</dbReference>
<dbReference type="PDB" id="6XZM">
    <property type="method" value="X-ray"/>
    <property type="resolution" value="2.10 A"/>
    <property type="chains" value="A/B=12-381"/>
</dbReference>
<dbReference type="PDB" id="6XZN">
    <property type="method" value="X-ray"/>
    <property type="resolution" value="1.75 A"/>
    <property type="chains" value="A/B=12-381"/>
</dbReference>
<dbReference type="PDB" id="7VGG">
    <property type="method" value="EM"/>
    <property type="resolution" value="3.10 A"/>
    <property type="chains" value="B=1-440"/>
</dbReference>
<dbReference type="PDB" id="8GQE">
    <property type="method" value="X-ray"/>
    <property type="resolution" value="2.00 A"/>
    <property type="chains" value="B=12-421"/>
</dbReference>
<dbReference type="PDBsum" id="4D9S"/>
<dbReference type="PDBsum" id="4DNU"/>
<dbReference type="PDBsum" id="4DNV"/>
<dbReference type="PDBsum" id="4DNW"/>
<dbReference type="PDBsum" id="4NAA"/>
<dbReference type="PDBsum" id="4NBM"/>
<dbReference type="PDBsum" id="4NC4"/>
<dbReference type="PDBsum" id="6DD7"/>
<dbReference type="PDBsum" id="6QTQ"/>
<dbReference type="PDBsum" id="6QTS"/>
<dbReference type="PDBsum" id="6XZL"/>
<dbReference type="PDBsum" id="6XZM"/>
<dbReference type="PDBsum" id="6XZN"/>
<dbReference type="PDBsum" id="7VGG"/>
<dbReference type="PDBsum" id="8GQE"/>
<dbReference type="EMDB" id="EMD-31968"/>
<dbReference type="SMR" id="Q9FN03"/>
<dbReference type="BioGRID" id="21748">
    <property type="interactions" value="17"/>
</dbReference>
<dbReference type="DIP" id="DIP-59667N"/>
<dbReference type="FunCoup" id="Q9FN03">
    <property type="interactions" value="4223"/>
</dbReference>
<dbReference type="IntAct" id="Q9FN03">
    <property type="interactions" value="3"/>
</dbReference>
<dbReference type="MINT" id="Q9FN03"/>
<dbReference type="STRING" id="3702.Q9FN03"/>
<dbReference type="iPTMnet" id="Q9FN03"/>
<dbReference type="PaxDb" id="3702-AT5G63860.1"/>
<dbReference type="ProteomicsDB" id="228668"/>
<dbReference type="EnsemblPlants" id="AT5G63860.1">
    <property type="protein sequence ID" value="AT5G63860.1"/>
    <property type="gene ID" value="AT5G63860"/>
</dbReference>
<dbReference type="GeneID" id="836506"/>
<dbReference type="Gramene" id="AT5G63860.1">
    <property type="protein sequence ID" value="AT5G63860.1"/>
    <property type="gene ID" value="AT5G63860"/>
</dbReference>
<dbReference type="KEGG" id="ath:AT5G63860"/>
<dbReference type="Araport" id="AT5G63860"/>
<dbReference type="TAIR" id="AT5G63860">
    <property type="gene designation" value="UVR8"/>
</dbReference>
<dbReference type="eggNOG" id="KOG1426">
    <property type="taxonomic scope" value="Eukaryota"/>
</dbReference>
<dbReference type="HOGENOM" id="CLU_005210_1_1_1"/>
<dbReference type="InParanoid" id="Q9FN03"/>
<dbReference type="OMA" id="WRWGCSG"/>
<dbReference type="OrthoDB" id="8068875at2759"/>
<dbReference type="PhylomeDB" id="Q9FN03"/>
<dbReference type="EvolutionaryTrace" id="Q9FN03"/>
<dbReference type="PRO" id="PR:Q9FN03"/>
<dbReference type="Proteomes" id="UP000006548">
    <property type="component" value="Chromosome 5"/>
</dbReference>
<dbReference type="ExpressionAtlas" id="Q9FN03">
    <property type="expression patterns" value="baseline and differential"/>
</dbReference>
<dbReference type="GO" id="GO:0000785">
    <property type="term" value="C:chromatin"/>
    <property type="evidence" value="ECO:0000314"/>
    <property type="project" value="TAIR"/>
</dbReference>
<dbReference type="GO" id="GO:0005829">
    <property type="term" value="C:cytosol"/>
    <property type="evidence" value="ECO:0000314"/>
    <property type="project" value="TAIR"/>
</dbReference>
<dbReference type="GO" id="GO:0005634">
    <property type="term" value="C:nucleus"/>
    <property type="evidence" value="ECO:0000314"/>
    <property type="project" value="TAIR"/>
</dbReference>
<dbReference type="GO" id="GO:0009536">
    <property type="term" value="C:plastid"/>
    <property type="evidence" value="ECO:0007005"/>
    <property type="project" value="TAIR"/>
</dbReference>
<dbReference type="GO" id="GO:0003682">
    <property type="term" value="F:chromatin binding"/>
    <property type="evidence" value="ECO:0000314"/>
    <property type="project" value="TAIR"/>
</dbReference>
<dbReference type="GO" id="GO:0005085">
    <property type="term" value="F:guanyl-nucleotide exchange factor activity"/>
    <property type="evidence" value="ECO:0000250"/>
    <property type="project" value="TAIR"/>
</dbReference>
<dbReference type="GO" id="GO:0042802">
    <property type="term" value="F:identical protein binding"/>
    <property type="evidence" value="ECO:0000353"/>
    <property type="project" value="IntAct"/>
</dbReference>
<dbReference type="GO" id="GO:0009881">
    <property type="term" value="F:photoreceptor activity"/>
    <property type="evidence" value="ECO:0007669"/>
    <property type="project" value="UniProtKB-KW"/>
</dbReference>
<dbReference type="GO" id="GO:0042803">
    <property type="term" value="F:protein homodimerization activity"/>
    <property type="evidence" value="ECO:0000314"/>
    <property type="project" value="TAIR"/>
</dbReference>
<dbReference type="GO" id="GO:0009649">
    <property type="term" value="P:entrainment of circadian clock"/>
    <property type="evidence" value="ECO:0000315"/>
    <property type="project" value="TAIR"/>
</dbReference>
<dbReference type="GO" id="GO:0009411">
    <property type="term" value="P:response to UV"/>
    <property type="evidence" value="ECO:0000315"/>
    <property type="project" value="TAIR"/>
</dbReference>
<dbReference type="GO" id="GO:0010224">
    <property type="term" value="P:response to UV-B"/>
    <property type="evidence" value="ECO:0000316"/>
    <property type="project" value="TAIR"/>
</dbReference>
<dbReference type="FunFam" id="2.130.10.30:FF:000045">
    <property type="entry name" value="Ultraviolet-B receptor UVR8"/>
    <property type="match status" value="1"/>
</dbReference>
<dbReference type="Gene3D" id="2.130.10.30">
    <property type="entry name" value="Regulator of chromosome condensation 1/beta-lactamase-inhibitor protein II"/>
    <property type="match status" value="1"/>
</dbReference>
<dbReference type="InterPro" id="IPR009091">
    <property type="entry name" value="RCC1/BLIP-II"/>
</dbReference>
<dbReference type="InterPro" id="IPR000408">
    <property type="entry name" value="Reg_chr_condens"/>
</dbReference>
<dbReference type="InterPro" id="IPR051210">
    <property type="entry name" value="Ub_ligase/GEF_domain"/>
</dbReference>
<dbReference type="PANTHER" id="PTHR22870">
    <property type="entry name" value="REGULATOR OF CHROMOSOME CONDENSATION"/>
    <property type="match status" value="1"/>
</dbReference>
<dbReference type="PANTHER" id="PTHR22870:SF360">
    <property type="entry name" value="ULTRAVIOLET-B RECEPTOR UVR8"/>
    <property type="match status" value="1"/>
</dbReference>
<dbReference type="Pfam" id="PF00415">
    <property type="entry name" value="RCC1"/>
    <property type="match status" value="1"/>
</dbReference>
<dbReference type="Pfam" id="PF25390">
    <property type="entry name" value="WD40_RLD"/>
    <property type="match status" value="1"/>
</dbReference>
<dbReference type="PRINTS" id="PR00633">
    <property type="entry name" value="RCCNDNSATION"/>
</dbReference>
<dbReference type="SUPFAM" id="SSF50985">
    <property type="entry name" value="RCC1/BLIP-II"/>
    <property type="match status" value="1"/>
</dbReference>
<dbReference type="PROSITE" id="PS00626">
    <property type="entry name" value="RCC1_2"/>
    <property type="match status" value="5"/>
</dbReference>
<dbReference type="PROSITE" id="PS50012">
    <property type="entry name" value="RCC1_3"/>
    <property type="match status" value="7"/>
</dbReference>